<sequence length="967" mass="109746">MPFTLGQRWISDTESELGLGTVVAVDTRMITLLFPASGENRLYSRSDAPITRVMFNPGDTVTSHEGWQLKVDDVREEKGLLVYCGQRLDDETSAELREVFLDSKLTFNKPQDRLFAGQIDRMDRFALRYRARKHQNEQALQQWGGLRGMRASLIPHQLHIAHEVGQRHAPRVLLADEVGLGKTIEAGMIIHQQLLAGRASRVLIIVPETLQHQWLVEMLRRFNLLFSLFDDERYAEAKLDSSNPFETEQLVICSLGFVQRNAQRFAQLVNADWDLLVVDEAHHLVWSEESPSAEYQAVETLARATPAVLLLTATPEQLGQQSHFARLRLLDPNRFHDYQEFLAEQQQYRPVADAVTLLLAGEKAQTAELNALSDLLGEQDIEPLLKAINSDSDDNQKARQELIAMLMDRHGTSRVLFRNTRQGVKGFPQRILHQIRLPLPSQYQTAIKVSGIMNANKTLEVRARDMLYPEQIYQQLEGDDATWWNFDPRVEWLLNYLTANRDEKVLVICAQAATALQLEQVLRTREAIRAAVFHEGLSILERDRAAAYFASEEEGAQVLICSEIGSEGRNFQFASHLVMFDLPFNPDLLEQRIGRLDRIGQAKEIQILVPYLENTAQAMLVRWYHEGLDAFEHTCPTGRTIYDAHHAQLIERLTTVGEQQGLDEFIHTCRQQHDNLKQQLEQGRDRLLEMHSNGGEQAQLLAQAIAEQDNDVNLVTFALNLFDIVGINQEDRSDNLIILTPSDHMLVPDFPGLPQDGCTITFDRDQALSREDAQFISWEHPLIRNGLDLVLSGDTGSCAVSLLKNKALPVGTLLAELVYVVEAQAPKHLQLTRFLPPTPVRLLMDRKGTNLAAQVEFESFNRQLNAVNRHTSSKLVNAVQADVHAMLQQAEALVEAQARQLITEAQEQADLQLRRELERLEALKAVNPNIREDELTALESQREQVLSNLHEANWRLDAIRLVVVTHQ</sequence>
<keyword id="KW-0010">Activator</keyword>
<keyword id="KW-0067">ATP-binding</keyword>
<keyword id="KW-0238">DNA-binding</keyword>
<keyword id="KW-0347">Helicase</keyword>
<keyword id="KW-0378">Hydrolase</keyword>
<keyword id="KW-0547">Nucleotide-binding</keyword>
<keyword id="KW-0804">Transcription</keyword>
<keyword id="KW-0805">Transcription regulation</keyword>
<feature type="chain" id="PRO_1000216057" description="RNA polymerase-associated protein RapA">
    <location>
        <begin position="1"/>
        <end position="967"/>
    </location>
</feature>
<feature type="domain" description="Helicase ATP-binding" evidence="1">
    <location>
        <begin position="163"/>
        <end position="333"/>
    </location>
</feature>
<feature type="domain" description="Helicase C-terminal" evidence="1">
    <location>
        <begin position="489"/>
        <end position="643"/>
    </location>
</feature>
<feature type="short sequence motif" description="DEAH box">
    <location>
        <begin position="279"/>
        <end position="282"/>
    </location>
</feature>
<feature type="binding site" evidence="1">
    <location>
        <begin position="176"/>
        <end position="183"/>
    </location>
    <ligand>
        <name>ATP</name>
        <dbReference type="ChEBI" id="CHEBI:30616"/>
    </ligand>
</feature>
<organism>
    <name type="scientific">Pectobacterium carotovorum subsp. carotovorum (strain PC1)</name>
    <dbReference type="NCBI Taxonomy" id="561230"/>
    <lineage>
        <taxon>Bacteria</taxon>
        <taxon>Pseudomonadati</taxon>
        <taxon>Pseudomonadota</taxon>
        <taxon>Gammaproteobacteria</taxon>
        <taxon>Enterobacterales</taxon>
        <taxon>Pectobacteriaceae</taxon>
        <taxon>Pectobacterium</taxon>
    </lineage>
</organism>
<comment type="function">
    <text evidence="1">Transcription regulator that activates transcription by stimulating RNA polymerase (RNAP) recycling in case of stress conditions such as supercoiled DNA or high salt concentrations. Probably acts by releasing the RNAP, when it is trapped or immobilized on tightly supercoiled DNA. Does not activate transcription on linear DNA. Probably not involved in DNA repair.</text>
</comment>
<comment type="subunit">
    <text evidence="1">Interacts with the RNAP. Has a higher affinity for the core RNAP than for the holoenzyme. Its ATPase activity is stimulated by binding to RNAP.</text>
</comment>
<comment type="similarity">
    <text evidence="1">Belongs to the SNF2/RAD54 helicase family. RapA subfamily.</text>
</comment>
<protein>
    <recommendedName>
        <fullName evidence="1">RNA polymerase-associated protein RapA</fullName>
        <ecNumber evidence="1">3.6.4.-</ecNumber>
    </recommendedName>
    <alternativeName>
        <fullName evidence="1">ATP-dependent helicase HepA</fullName>
    </alternativeName>
</protein>
<gene>
    <name evidence="1" type="primary">rapA</name>
    <name type="ordered locus">PC1_3629</name>
</gene>
<evidence type="ECO:0000255" key="1">
    <source>
        <dbReference type="HAMAP-Rule" id="MF_01821"/>
    </source>
</evidence>
<reference key="1">
    <citation type="submission" date="2009-07" db="EMBL/GenBank/DDBJ databases">
        <title>Complete sequence of Pectobacterium carotovorum subsp. carotovorum PC1.</title>
        <authorList>
            <consortium name="US DOE Joint Genome Institute"/>
            <person name="Lucas S."/>
            <person name="Copeland A."/>
            <person name="Lapidus A."/>
            <person name="Glavina del Rio T."/>
            <person name="Tice H."/>
            <person name="Bruce D."/>
            <person name="Goodwin L."/>
            <person name="Pitluck S."/>
            <person name="Munk A.C."/>
            <person name="Brettin T."/>
            <person name="Detter J.C."/>
            <person name="Han C."/>
            <person name="Tapia R."/>
            <person name="Larimer F."/>
            <person name="Land M."/>
            <person name="Hauser L."/>
            <person name="Kyrpides N."/>
            <person name="Mikhailova N."/>
            <person name="Balakrishnan V."/>
            <person name="Glasner J."/>
            <person name="Perna N.T."/>
        </authorList>
    </citation>
    <scope>NUCLEOTIDE SEQUENCE [LARGE SCALE GENOMIC DNA]</scope>
    <source>
        <strain>PC1</strain>
    </source>
</reference>
<dbReference type="EC" id="3.6.4.-" evidence="1"/>
<dbReference type="EMBL" id="CP001657">
    <property type="protein sequence ID" value="ACT14644.1"/>
    <property type="molecule type" value="Genomic_DNA"/>
</dbReference>
<dbReference type="RefSeq" id="WP_015841760.1">
    <property type="nucleotide sequence ID" value="NC_012917.1"/>
</dbReference>
<dbReference type="SMR" id="C6DEY0"/>
<dbReference type="STRING" id="561230.PC1_3629"/>
<dbReference type="KEGG" id="pct:PC1_3629"/>
<dbReference type="eggNOG" id="COG0553">
    <property type="taxonomic scope" value="Bacteria"/>
</dbReference>
<dbReference type="HOGENOM" id="CLU_011520_0_0_6"/>
<dbReference type="OrthoDB" id="9814088at2"/>
<dbReference type="Proteomes" id="UP000002736">
    <property type="component" value="Chromosome"/>
</dbReference>
<dbReference type="GO" id="GO:0005524">
    <property type="term" value="F:ATP binding"/>
    <property type="evidence" value="ECO:0007669"/>
    <property type="project" value="UniProtKB-UniRule"/>
</dbReference>
<dbReference type="GO" id="GO:0003677">
    <property type="term" value="F:DNA binding"/>
    <property type="evidence" value="ECO:0007669"/>
    <property type="project" value="UniProtKB-KW"/>
</dbReference>
<dbReference type="GO" id="GO:0004386">
    <property type="term" value="F:helicase activity"/>
    <property type="evidence" value="ECO:0007669"/>
    <property type="project" value="UniProtKB-UniRule"/>
</dbReference>
<dbReference type="GO" id="GO:0016817">
    <property type="term" value="F:hydrolase activity, acting on acid anhydrides"/>
    <property type="evidence" value="ECO:0007669"/>
    <property type="project" value="InterPro"/>
</dbReference>
<dbReference type="GO" id="GO:0006355">
    <property type="term" value="P:regulation of DNA-templated transcription"/>
    <property type="evidence" value="ECO:0007669"/>
    <property type="project" value="UniProtKB-UniRule"/>
</dbReference>
<dbReference type="CDD" id="cd18011">
    <property type="entry name" value="DEXDc_RapA"/>
    <property type="match status" value="1"/>
</dbReference>
<dbReference type="CDD" id="cd18793">
    <property type="entry name" value="SF2_C_SNF"/>
    <property type="match status" value="1"/>
</dbReference>
<dbReference type="FunFam" id="3.30.360.80:FF:000001">
    <property type="entry name" value="RNA polymerase-associated protein RapA"/>
    <property type="match status" value="1"/>
</dbReference>
<dbReference type="FunFam" id="3.40.50.10810:FF:000012">
    <property type="entry name" value="RNA polymerase-associated protein RapA"/>
    <property type="match status" value="1"/>
</dbReference>
<dbReference type="Gene3D" id="2.30.30.140">
    <property type="match status" value="1"/>
</dbReference>
<dbReference type="Gene3D" id="2.30.30.930">
    <property type="match status" value="1"/>
</dbReference>
<dbReference type="Gene3D" id="3.30.360.80">
    <property type="match status" value="1"/>
</dbReference>
<dbReference type="Gene3D" id="6.10.140.1500">
    <property type="match status" value="1"/>
</dbReference>
<dbReference type="Gene3D" id="6.10.140.2230">
    <property type="match status" value="1"/>
</dbReference>
<dbReference type="Gene3D" id="3.40.50.300">
    <property type="entry name" value="P-loop containing nucleotide triphosphate hydrolases"/>
    <property type="match status" value="1"/>
</dbReference>
<dbReference type="Gene3D" id="3.40.50.10810">
    <property type="entry name" value="Tandem AAA-ATPase domain"/>
    <property type="match status" value="1"/>
</dbReference>
<dbReference type="HAMAP" id="MF_01821">
    <property type="entry name" value="Helicase_RapA"/>
    <property type="match status" value="1"/>
</dbReference>
<dbReference type="InterPro" id="IPR014001">
    <property type="entry name" value="Helicase_ATP-bd"/>
</dbReference>
<dbReference type="InterPro" id="IPR001650">
    <property type="entry name" value="Helicase_C-like"/>
</dbReference>
<dbReference type="InterPro" id="IPR023949">
    <property type="entry name" value="Helicase_RapA"/>
</dbReference>
<dbReference type="InterPro" id="IPR027417">
    <property type="entry name" value="P-loop_NTPase"/>
</dbReference>
<dbReference type="InterPro" id="IPR022737">
    <property type="entry name" value="RapA_C"/>
</dbReference>
<dbReference type="InterPro" id="IPR038718">
    <property type="entry name" value="SNF2-like_sf"/>
</dbReference>
<dbReference type="InterPro" id="IPR049730">
    <property type="entry name" value="SNF2/RAD54-like_C"/>
</dbReference>
<dbReference type="InterPro" id="IPR000330">
    <property type="entry name" value="SNF2_N"/>
</dbReference>
<dbReference type="InterPro" id="IPR040765">
    <property type="entry name" value="Tudor_1_RapA"/>
</dbReference>
<dbReference type="InterPro" id="IPR040766">
    <property type="entry name" value="Tudor_2_RapA"/>
</dbReference>
<dbReference type="NCBIfam" id="NF003426">
    <property type="entry name" value="PRK04914.1"/>
    <property type="match status" value="1"/>
</dbReference>
<dbReference type="PANTHER" id="PTHR45766">
    <property type="entry name" value="DNA ANNEALING HELICASE AND ENDONUCLEASE ZRANB3 FAMILY MEMBER"/>
    <property type="match status" value="1"/>
</dbReference>
<dbReference type="PANTHER" id="PTHR45766:SF6">
    <property type="entry name" value="SWI_SNF-RELATED MATRIX-ASSOCIATED ACTIN-DEPENDENT REGULATOR OF CHROMATIN SUBFAMILY A-LIKE PROTEIN 1"/>
    <property type="match status" value="1"/>
</dbReference>
<dbReference type="Pfam" id="PF00271">
    <property type="entry name" value="Helicase_C"/>
    <property type="match status" value="1"/>
</dbReference>
<dbReference type="Pfam" id="PF12137">
    <property type="entry name" value="RapA_C"/>
    <property type="match status" value="1"/>
</dbReference>
<dbReference type="Pfam" id="PF00176">
    <property type="entry name" value="SNF2-rel_dom"/>
    <property type="match status" value="1"/>
</dbReference>
<dbReference type="Pfam" id="PF18339">
    <property type="entry name" value="Tudor_1_RapA"/>
    <property type="match status" value="1"/>
</dbReference>
<dbReference type="Pfam" id="PF18337">
    <property type="entry name" value="Tudor_RapA"/>
    <property type="match status" value="1"/>
</dbReference>
<dbReference type="SMART" id="SM00487">
    <property type="entry name" value="DEXDc"/>
    <property type="match status" value="1"/>
</dbReference>
<dbReference type="SMART" id="SM00490">
    <property type="entry name" value="HELICc"/>
    <property type="match status" value="1"/>
</dbReference>
<dbReference type="SUPFAM" id="SSF52540">
    <property type="entry name" value="P-loop containing nucleoside triphosphate hydrolases"/>
    <property type="match status" value="2"/>
</dbReference>
<dbReference type="PROSITE" id="PS51192">
    <property type="entry name" value="HELICASE_ATP_BIND_1"/>
    <property type="match status" value="1"/>
</dbReference>
<dbReference type="PROSITE" id="PS51194">
    <property type="entry name" value="HELICASE_CTER"/>
    <property type="match status" value="1"/>
</dbReference>
<proteinExistence type="inferred from homology"/>
<name>RAPA_PECCP</name>
<accession>C6DEY0</accession>